<comment type="function">
    <text evidence="1">Exhibits S-adenosyl-L-methionine-dependent methyltransferase activity.</text>
</comment>
<comment type="similarity">
    <text evidence="2">Belongs to the UPF0677 family.</text>
</comment>
<feature type="chain" id="PRO_0000361163" description="Putative S-adenosyl-L-methionine-dependent methyltransferase MMAR_1068">
    <location>
        <begin position="1"/>
        <end position="302"/>
    </location>
</feature>
<feature type="binding site" evidence="1">
    <location>
        <position position="127"/>
    </location>
    <ligand>
        <name>S-adenosyl-L-methionine</name>
        <dbReference type="ChEBI" id="CHEBI:59789"/>
    </ligand>
</feature>
<feature type="binding site" evidence="1">
    <location>
        <begin position="156"/>
        <end position="157"/>
    </location>
    <ligand>
        <name>S-adenosyl-L-methionine</name>
        <dbReference type="ChEBI" id="CHEBI:59789"/>
    </ligand>
</feature>
<dbReference type="EC" id="2.1.1.-"/>
<dbReference type="EMBL" id="CP000854">
    <property type="protein sequence ID" value="ACC39524.1"/>
    <property type="molecule type" value="Genomic_DNA"/>
</dbReference>
<dbReference type="RefSeq" id="WP_012392963.1">
    <property type="nucleotide sequence ID" value="NC_010612.1"/>
</dbReference>
<dbReference type="SMR" id="B2HCV2"/>
<dbReference type="STRING" id="216594.MMAR_1068"/>
<dbReference type="KEGG" id="mmi:MMAR_1068"/>
<dbReference type="eggNOG" id="COG3315">
    <property type="taxonomic scope" value="Bacteria"/>
</dbReference>
<dbReference type="HOGENOM" id="CLU_056160_2_1_11"/>
<dbReference type="OrthoDB" id="9806164at2"/>
<dbReference type="Proteomes" id="UP000001190">
    <property type="component" value="Chromosome"/>
</dbReference>
<dbReference type="GO" id="GO:0008168">
    <property type="term" value="F:methyltransferase activity"/>
    <property type="evidence" value="ECO:0007669"/>
    <property type="project" value="UniProtKB-KW"/>
</dbReference>
<dbReference type="GO" id="GO:0032259">
    <property type="term" value="P:methylation"/>
    <property type="evidence" value="ECO:0007669"/>
    <property type="project" value="UniProtKB-KW"/>
</dbReference>
<dbReference type="FunFam" id="3.40.50.150:FF:000152">
    <property type="entry name" value="S-adenosyl-L-methionine-dependent methyltransferase"/>
    <property type="match status" value="1"/>
</dbReference>
<dbReference type="Gene3D" id="3.40.50.150">
    <property type="entry name" value="Vaccinia Virus protein VP39"/>
    <property type="match status" value="1"/>
</dbReference>
<dbReference type="InterPro" id="IPR007213">
    <property type="entry name" value="Ppm1/Ppm2/Tcmp"/>
</dbReference>
<dbReference type="InterPro" id="IPR029063">
    <property type="entry name" value="SAM-dependent_MTases_sf"/>
</dbReference>
<dbReference type="InterPro" id="IPR011610">
    <property type="entry name" value="SAM_mthyl_Trfase_ML2640-like"/>
</dbReference>
<dbReference type="NCBIfam" id="TIGR00027">
    <property type="entry name" value="mthyl_TIGR00027"/>
    <property type="match status" value="1"/>
</dbReference>
<dbReference type="PANTHER" id="PTHR43619">
    <property type="entry name" value="S-ADENOSYL-L-METHIONINE-DEPENDENT METHYLTRANSFERASE YKTD-RELATED"/>
    <property type="match status" value="1"/>
</dbReference>
<dbReference type="PANTHER" id="PTHR43619:SF2">
    <property type="entry name" value="S-ADENOSYL-L-METHIONINE-DEPENDENT METHYLTRANSFERASES SUPERFAMILY PROTEIN"/>
    <property type="match status" value="1"/>
</dbReference>
<dbReference type="Pfam" id="PF04072">
    <property type="entry name" value="LCM"/>
    <property type="match status" value="1"/>
</dbReference>
<dbReference type="SUPFAM" id="SSF53335">
    <property type="entry name" value="S-adenosyl-L-methionine-dependent methyltransferases"/>
    <property type="match status" value="1"/>
</dbReference>
<reference key="1">
    <citation type="journal article" date="2008" name="Genome Res.">
        <title>Insights from the complete genome sequence of Mycobacterium marinum on the evolution of Mycobacterium tuberculosis.</title>
        <authorList>
            <person name="Stinear T.P."/>
            <person name="Seemann T."/>
            <person name="Harrison P.F."/>
            <person name="Jenkin G.A."/>
            <person name="Davies J.K."/>
            <person name="Johnson P.D."/>
            <person name="Abdellah Z."/>
            <person name="Arrowsmith C."/>
            <person name="Chillingworth T."/>
            <person name="Churcher C."/>
            <person name="Clarke K."/>
            <person name="Cronin A."/>
            <person name="Davis P."/>
            <person name="Goodhead I."/>
            <person name="Holroyd N."/>
            <person name="Jagels K."/>
            <person name="Lord A."/>
            <person name="Moule S."/>
            <person name="Mungall K."/>
            <person name="Norbertczak H."/>
            <person name="Quail M.A."/>
            <person name="Rabbinowitsch E."/>
            <person name="Walker D."/>
            <person name="White B."/>
            <person name="Whitehead S."/>
            <person name="Small P.L."/>
            <person name="Brosch R."/>
            <person name="Ramakrishnan L."/>
            <person name="Fischbach M.A."/>
            <person name="Parkhill J."/>
            <person name="Cole S.T."/>
        </authorList>
    </citation>
    <scope>NUCLEOTIDE SEQUENCE [LARGE SCALE GENOMIC DNA]</scope>
    <source>
        <strain>ATCC BAA-535 / M</strain>
    </source>
</reference>
<accession>B2HCV2</accession>
<keyword id="KW-0489">Methyltransferase</keyword>
<keyword id="KW-1185">Reference proteome</keyword>
<keyword id="KW-0949">S-adenosyl-L-methionine</keyword>
<keyword id="KW-0808">Transferase</keyword>
<gene>
    <name type="ordered locus">MMAR_1068</name>
</gene>
<name>Y1068_MYCMM</name>
<protein>
    <recommendedName>
        <fullName>Putative S-adenosyl-L-methionine-dependent methyltransferase MMAR_1068</fullName>
        <ecNumber>2.1.1.-</ecNumber>
    </recommendedName>
</protein>
<evidence type="ECO:0000250" key="1"/>
<evidence type="ECO:0000305" key="2"/>
<organism>
    <name type="scientific">Mycobacterium marinum (strain ATCC BAA-535 / M)</name>
    <dbReference type="NCBI Taxonomy" id="216594"/>
    <lineage>
        <taxon>Bacteria</taxon>
        <taxon>Bacillati</taxon>
        <taxon>Actinomycetota</taxon>
        <taxon>Actinomycetes</taxon>
        <taxon>Mycobacteriales</taxon>
        <taxon>Mycobacteriaceae</taxon>
        <taxon>Mycobacterium</taxon>
        <taxon>Mycobacterium ulcerans group</taxon>
    </lineage>
</organism>
<proteinExistence type="inferred from homology"/>
<sequence>MTRTDQDSWDLASSVGATATMVAAARALASAEANPIIDDPFAAPLVRAVGLDFFTRLAEGEIDHDEQAQRDRQLVADSIAVRTRFFDDFFLDAARRGVRQSVILAAGLDARAYRLPWPSGSVVYEVDQPDVIDFKDTTMSALGAVPTATRRTVRVDLRDDWPAALRHNGFDTTQPTAWSAEGLLMYLPPDAQDRLFDAISGLSAPGSRLATEYHPDPGSTMAERAQQFNQRWVRLGCDIDLSGLFYEGERSNVVDYLTEHGWHVAARPRQDLFTDYGRVFPDADTSQLRSIVAVTATFGEAG</sequence>